<dbReference type="EMBL" id="M14632">
    <property type="protein sequence ID" value="AAB59227.1"/>
    <property type="molecule type" value="mRNA"/>
</dbReference>
<dbReference type="PIR" id="A25814">
    <property type="entry name" value="A25814"/>
</dbReference>
<dbReference type="BMRB" id="P13827"/>
<dbReference type="SMR" id="P13827"/>
<dbReference type="DrugBank" id="DB11638">
    <property type="generic name" value="Artenimol"/>
</dbReference>
<dbReference type="GlyCosmos" id="P13827">
    <property type="glycosylation" value="1 site, No reported glycans"/>
</dbReference>
<dbReference type="GO" id="GO:0005576">
    <property type="term" value="C:extracellular region"/>
    <property type="evidence" value="ECO:0007669"/>
    <property type="project" value="UniProtKB-SubCell"/>
</dbReference>
<dbReference type="GO" id="GO:0005886">
    <property type="term" value="C:plasma membrane"/>
    <property type="evidence" value="ECO:0007669"/>
    <property type="project" value="UniProtKB-SubCell"/>
</dbReference>
<dbReference type="GO" id="GO:0098552">
    <property type="term" value="C:side of membrane"/>
    <property type="evidence" value="ECO:0007669"/>
    <property type="project" value="UniProtKB-KW"/>
</dbReference>
<name>MSP1_PLAFD</name>
<accession>P13827</accession>
<sequence>MKIIFFLCSFLFFIINTQCVTHESYQELVKKLEALEDAVLTGYSLFQKEKMVLNEGTSGTAVTTSTPGSKGSVASGGSGGSVASGGSVASGGSGNSRRTNPSDNSSDSDAKSYADLKHRVRNYLLTIKELKYPQLFDLTNHMLTLCDNIHGFKYLIDGYEEINELLYKLNFYFDLLRAKLNDVCANDYCQIPFNLKIRANELDVLKKLVFGYRKPLDNIKDNVGKMEDYIKKK</sequence>
<reference key="1">
    <citation type="journal article" date="1986" name="Gene">
        <title>Conservation and antigenicity of N-terminal sequences of GP185 from different Plasmodium falciparum isolates.</title>
        <authorList>
            <person name="Howard R.F."/>
            <person name="Ardeshir F."/>
            <person name="Reese R.T."/>
        </authorList>
    </citation>
    <scope>NUCLEOTIDE SEQUENCE [MRNA]</scope>
    <scope>POLYMORPHISM</scope>
</reference>
<gene>
    <name evidence="3" type="primary">MSP1</name>
</gene>
<organism>
    <name type="scientific">Plasmodium falciparum (isolate CDC / Honduras)</name>
    <dbReference type="NCBI Taxonomy" id="5836"/>
    <lineage>
        <taxon>Eukaryota</taxon>
        <taxon>Sar</taxon>
        <taxon>Alveolata</taxon>
        <taxon>Apicomplexa</taxon>
        <taxon>Aconoidasida</taxon>
        <taxon>Haemosporida</taxon>
        <taxon>Plasmodiidae</taxon>
        <taxon>Plasmodium</taxon>
        <taxon>Plasmodium (Laverania)</taxon>
    </lineage>
</organism>
<feature type="signal peptide" evidence="4">
    <location>
        <begin position="1"/>
        <end position="19"/>
    </location>
</feature>
<feature type="chain" id="PRO_0000024549" description="Merozoite surface protein 1">
    <location>
        <begin position="20"/>
        <end position="233" status="greater than"/>
    </location>
</feature>
<feature type="region of interest" description="Disordered" evidence="5">
    <location>
        <begin position="58"/>
        <end position="110"/>
    </location>
</feature>
<feature type="compositionally biased region" description="Polar residues" evidence="5">
    <location>
        <begin position="58"/>
        <end position="67"/>
    </location>
</feature>
<feature type="compositionally biased region" description="Gly residues" evidence="5">
    <location>
        <begin position="74"/>
        <end position="94"/>
    </location>
</feature>
<feature type="compositionally biased region" description="Polar residues" evidence="5">
    <location>
        <begin position="95"/>
        <end position="107"/>
    </location>
</feature>
<feature type="glycosylation site" description="N-linked (GlcNAc...) asparagine" evidence="4">
    <location>
        <position position="104"/>
    </location>
</feature>
<feature type="non-terminal residue">
    <location>
        <position position="233"/>
    </location>
</feature>
<keyword id="KW-1003">Cell membrane</keyword>
<keyword id="KW-0245">EGF-like domain</keyword>
<keyword id="KW-0325">Glycoprotein</keyword>
<keyword id="KW-0336">GPI-anchor</keyword>
<keyword id="KW-0449">Lipoprotein</keyword>
<keyword id="KW-0461">Malaria</keyword>
<keyword id="KW-0472">Membrane</keyword>
<keyword id="KW-0477">Merozoite</keyword>
<keyword id="KW-0677">Repeat</keyword>
<keyword id="KW-0964">Secreted</keyword>
<keyword id="KW-0732">Signal</keyword>
<protein>
    <recommendedName>
        <fullName evidence="3">Merozoite surface protein 1</fullName>
    </recommendedName>
    <alternativeName>
        <fullName evidence="7">Glycoprotein 185</fullName>
        <shortName evidence="7">GP185</shortName>
    </alternativeName>
    <alternativeName>
        <fullName evidence="2">Merozoite surface antigen</fullName>
    </alternativeName>
    <alternativeName>
        <fullName evidence="2">PMMSA</fullName>
    </alternativeName>
</protein>
<proteinExistence type="evidence at transcript level"/>
<evidence type="ECO:0000250" key="1">
    <source>
        <dbReference type="UniProtKB" id="P04933"/>
    </source>
</evidence>
<evidence type="ECO:0000250" key="2">
    <source>
        <dbReference type="UniProtKB" id="P13819"/>
    </source>
</evidence>
<evidence type="ECO:0000250" key="3">
    <source>
        <dbReference type="UniProtKB" id="Q8I0U8"/>
    </source>
</evidence>
<evidence type="ECO:0000255" key="4"/>
<evidence type="ECO:0000256" key="5">
    <source>
        <dbReference type="SAM" id="MobiDB-lite"/>
    </source>
</evidence>
<evidence type="ECO:0000269" key="6">
    <source>
    </source>
</evidence>
<evidence type="ECO:0000303" key="7">
    <source>
    </source>
</evidence>
<evidence type="ECO:0000305" key="8"/>
<comment type="function">
    <text evidence="1 3">During the asexual blood stage, involved in merozoite egress from host erythrocytes possibly via its interaction with the host cytoskeleton protein spectrin resulting in the destabilization of the host cytoskeleton and thus leading to erythrocyte cell membrane rupture (By similarity). Involved in the binding to host erythrocytes and is required for host erythrocyte invasion (By similarity).</text>
</comment>
<comment type="subunit">
    <text evidence="3">Forms a complex composed of subunits p83, p30, p38, and p42 which remain non-covalently associated; the complex is formed at the merozoite surface prior to egress from host erythrocytes. Forms a complex composed of processed MSP1 subunits, MSP6 subunit p36 and MSP7; the complex is formed at the merozoite surface prior to egress from host erythrocytes. Within the complex, interacts (via subunit p38) with MSP6 subunit p36 and (via subunits p83, p30 and p38) with MSP7 (via subunit p22). Forms a complex composed of MSP1, MSP6, DBLMSP1 and DBLMSP2. Within the complex, interacts (via subunit p38) with DBLMSP1 and DBLMSP2. Forms a complex composed of MSP1, and rhoptry proteins RhopH3, RAP1 and CLAG9/RhopH3. Within the complex, interacts (via subunits p42 and p19) with RhopH3 (via C-terminus). Forms a complex composed of MSP1, MSP6, MSP7, MSP9 and MSP3; within the complex, MSP6 and MSP9 mediate the binding to the host erythrocyte. Interacts (via subunits p19 and p42) with MSP9; the interaction is direct; MSP1 subunits p19 or p42, and MSP9 form a co-ligand complex that interacts with host SLC4A1/Band 3 protein. May interact with PFD6. Interacts with host spectrin.</text>
</comment>
<comment type="subcellular location">
    <subcellularLocation>
        <location evidence="1">Cell membrane</location>
        <topology evidence="8">Lipid-anchor</topology>
        <topology evidence="8">GPI-anchor</topology>
    </subcellularLocation>
    <subcellularLocation>
        <location evidence="1">Secreted</location>
    </subcellularLocation>
</comment>
<comment type="PTM">
    <text evidence="1 3">The p190 precursor is cleaved by SUB1 prior to merozoite egress into 4 subunits p83, p30, p38, and p42 which remain non-covalently associated. SUB1-mediated proteolytic cleavage occurs in an orderly manner; the first cleavage occurs at the p83/p30 site, followed by cleavage at the p30/p38 site, the last cleavage occurs at the p38/p42 site. The order of cleavage is essential for parasite viability (By similarity). SUB1-mediated processing is essential for merozoite egress (By similarity). In a second processing step during erythrocyte invasion, p42 is cleaved by SUB2 into p33 and p19; the latter remains attached to the merozoite surface via its GPI-anchor and stays on the surface during the subsequent ring stage (By similarity).</text>
</comment>
<comment type="polymorphism">
    <text evidence="6">The sequence varies across Plasmodium strains (PubMed:3542719). There are two major dimorphic forms of MSP1, typified by those expressed by the 3D7 and Wellcome P.falciparum isolates (PubMed:3542719).</text>
</comment>